<feature type="chain" id="PRO_0000248121" description="Nucleoside triphosphate/diphosphate phosphatase">
    <location>
        <begin position="1"/>
        <end position="177"/>
    </location>
</feature>
<feature type="active site" description="Proton donor" evidence="1">
    <location>
        <position position="23"/>
    </location>
</feature>
<feature type="binding site" evidence="1">
    <location>
        <position position="87"/>
    </location>
    <ligand>
        <name>Mg(2+)</name>
        <dbReference type="ChEBI" id="CHEBI:18420"/>
        <label>1</label>
    </ligand>
</feature>
<feature type="binding site" evidence="1">
    <location>
        <position position="103"/>
    </location>
    <ligand>
        <name>Mg(2+)</name>
        <dbReference type="ChEBI" id="CHEBI:18420"/>
        <label>1</label>
    </ligand>
</feature>
<feature type="binding site" evidence="1">
    <location>
        <position position="105"/>
    </location>
    <ligand>
        <name>Mg(2+)</name>
        <dbReference type="ChEBI" id="CHEBI:18420"/>
        <label>2</label>
    </ligand>
</feature>
<feature type="binding site" evidence="1">
    <location>
        <position position="107"/>
    </location>
    <ligand>
        <name>Mg(2+)</name>
        <dbReference type="ChEBI" id="CHEBI:18420"/>
        <label>1</label>
    </ligand>
</feature>
<feature type="binding site" evidence="1">
    <location>
        <position position="107"/>
    </location>
    <ligand>
        <name>Mg(2+)</name>
        <dbReference type="ChEBI" id="CHEBI:18420"/>
        <label>2</label>
    </ligand>
</feature>
<feature type="binding site" evidence="1">
    <location>
        <position position="120"/>
    </location>
    <ligand>
        <name>Mg(2+)</name>
        <dbReference type="ChEBI" id="CHEBI:18420"/>
        <label>2</label>
    </ligand>
</feature>
<feature type="binding site" evidence="1">
    <location>
        <position position="123"/>
    </location>
    <ligand>
        <name>Mg(2+)</name>
        <dbReference type="ChEBI" id="CHEBI:18420"/>
        <label>2</label>
    </ligand>
</feature>
<reference key="1">
    <citation type="journal article" date="2001" name="Proc. Natl. Acad. Sci. U.S.A.">
        <title>Complete genome sequence of an M1 strain of Streptococcus pyogenes.</title>
        <authorList>
            <person name="Ferretti J.J."/>
            <person name="McShan W.M."/>
            <person name="Ajdic D.J."/>
            <person name="Savic D.J."/>
            <person name="Savic G."/>
            <person name="Lyon K."/>
            <person name="Primeaux C."/>
            <person name="Sezate S."/>
            <person name="Suvorov A.N."/>
            <person name="Kenton S."/>
            <person name="Lai H.S."/>
            <person name="Lin S.P."/>
            <person name="Qian Y."/>
            <person name="Jia H.G."/>
            <person name="Najar F.Z."/>
            <person name="Ren Q."/>
            <person name="Zhu H."/>
            <person name="Song L."/>
            <person name="White J."/>
            <person name="Yuan X."/>
            <person name="Clifton S.W."/>
            <person name="Roe B.A."/>
            <person name="McLaughlin R.E."/>
        </authorList>
    </citation>
    <scope>NUCLEOTIDE SEQUENCE [LARGE SCALE GENOMIC DNA]</scope>
    <source>
        <strain>ATCC 700294 / SF370 / Serotype M1</strain>
    </source>
</reference>
<reference key="2">
    <citation type="journal article" date="2005" name="J. Infect. Dis.">
        <title>Evolutionary origin and emergence of a highly successful clone of serotype M1 group A Streptococcus involved multiple horizontal gene transfer events.</title>
        <authorList>
            <person name="Sumby P."/>
            <person name="Porcella S.F."/>
            <person name="Madrigal A.G."/>
            <person name="Barbian K.D."/>
            <person name="Virtaneva K."/>
            <person name="Ricklefs S.M."/>
            <person name="Sturdevant D.E."/>
            <person name="Graham M.R."/>
            <person name="Vuopio-Varkila J."/>
            <person name="Hoe N.P."/>
            <person name="Musser J.M."/>
        </authorList>
    </citation>
    <scope>NUCLEOTIDE SEQUENCE [LARGE SCALE GENOMIC DNA]</scope>
    <source>
        <strain>ATCC BAA-947 / MGAS5005 / Serotype M1</strain>
    </source>
</reference>
<sequence length="177" mass="21178">MKLPKEGDFITIQSYKHDGSLHRTWRDTMVLKTTENALIGVNDHTLVTESDGRRWVTREPAIVYFHKKYWFNIIAMIRDNGVSYYCNLASPYMMDTEALKYIDYDLDVKVFADGEKRLLDVDEYEIHKKEMQYSADMDFILKENVKILVDWINHEKGPFSKAYITIWYKRYLELKNR</sequence>
<dbReference type="EC" id="3.6.1.15" evidence="1"/>
<dbReference type="EC" id="3.6.1.6" evidence="1"/>
<dbReference type="EMBL" id="AE004092">
    <property type="protein sequence ID" value="AAK34385.1"/>
    <property type="molecule type" value="Genomic_DNA"/>
</dbReference>
<dbReference type="EMBL" id="CP000017">
    <property type="protein sequence ID" value="AAZ51939.1"/>
    <property type="molecule type" value="Genomic_DNA"/>
</dbReference>
<dbReference type="RefSeq" id="NP_269664.1">
    <property type="nucleotide sequence ID" value="NC_002737.2"/>
</dbReference>
<dbReference type="SMR" id="Q99YP1"/>
<dbReference type="PaxDb" id="1314-HKU360_01360"/>
<dbReference type="DNASU" id="901859"/>
<dbReference type="KEGG" id="spy:SPy_1608"/>
<dbReference type="KEGG" id="spz:M5005_Spy1321"/>
<dbReference type="PATRIC" id="fig|160490.10.peg.1402"/>
<dbReference type="HOGENOM" id="CLU_109787_1_0_9"/>
<dbReference type="OMA" id="QSYKHNG"/>
<dbReference type="Proteomes" id="UP000000750">
    <property type="component" value="Chromosome"/>
</dbReference>
<dbReference type="GO" id="GO:0000287">
    <property type="term" value="F:magnesium ion binding"/>
    <property type="evidence" value="ECO:0007669"/>
    <property type="project" value="UniProtKB-UniRule"/>
</dbReference>
<dbReference type="GO" id="GO:0017110">
    <property type="term" value="F:nucleoside diphosphate phosphatase activity"/>
    <property type="evidence" value="ECO:0007669"/>
    <property type="project" value="UniProtKB-UniRule"/>
</dbReference>
<dbReference type="GO" id="GO:0017111">
    <property type="term" value="F:ribonucleoside triphosphate phosphatase activity"/>
    <property type="evidence" value="ECO:0007669"/>
    <property type="project" value="UniProtKB-UniRule"/>
</dbReference>
<dbReference type="Gene3D" id="2.40.380.10">
    <property type="entry name" value="FomD-like"/>
    <property type="match status" value="1"/>
</dbReference>
<dbReference type="HAMAP" id="MF_01568">
    <property type="entry name" value="Ntdp"/>
    <property type="match status" value="1"/>
</dbReference>
<dbReference type="InterPro" id="IPR007295">
    <property type="entry name" value="DUF402"/>
</dbReference>
<dbReference type="InterPro" id="IPR035930">
    <property type="entry name" value="FomD-like_sf"/>
</dbReference>
<dbReference type="InterPro" id="IPR050212">
    <property type="entry name" value="Ntdp-like"/>
</dbReference>
<dbReference type="InterPro" id="IPR016882">
    <property type="entry name" value="SA1684"/>
</dbReference>
<dbReference type="NCBIfam" id="NF010183">
    <property type="entry name" value="PRK13662.1"/>
    <property type="match status" value="1"/>
</dbReference>
<dbReference type="PANTHER" id="PTHR39159">
    <property type="match status" value="1"/>
</dbReference>
<dbReference type="PANTHER" id="PTHR39159:SF1">
    <property type="entry name" value="UPF0374 PROTEIN YGAC"/>
    <property type="match status" value="1"/>
</dbReference>
<dbReference type="Pfam" id="PF04167">
    <property type="entry name" value="DUF402"/>
    <property type="match status" value="1"/>
</dbReference>
<dbReference type="PIRSF" id="PIRSF028345">
    <property type="entry name" value="UCP028345"/>
    <property type="match status" value="1"/>
</dbReference>
<dbReference type="SUPFAM" id="SSF159234">
    <property type="entry name" value="FomD-like"/>
    <property type="match status" value="1"/>
</dbReference>
<proteinExistence type="inferred from homology"/>
<evidence type="ECO:0000255" key="1">
    <source>
        <dbReference type="HAMAP-Rule" id="MF_01568"/>
    </source>
</evidence>
<name>NTDP_STRP1</name>
<accession>Q99YP1</accession>
<accession>Q48XI6</accession>
<comment type="function">
    <text evidence="1">Has nucleoside phosphatase activity towards nucleoside triphosphates and nucleoside diphosphates.</text>
</comment>
<comment type="catalytic activity">
    <reaction evidence="1">
        <text>a ribonucleoside 5'-triphosphate + H2O = a ribonucleoside 5'-diphosphate + phosphate + H(+)</text>
        <dbReference type="Rhea" id="RHEA:23680"/>
        <dbReference type="ChEBI" id="CHEBI:15377"/>
        <dbReference type="ChEBI" id="CHEBI:15378"/>
        <dbReference type="ChEBI" id="CHEBI:43474"/>
        <dbReference type="ChEBI" id="CHEBI:57930"/>
        <dbReference type="ChEBI" id="CHEBI:61557"/>
        <dbReference type="EC" id="3.6.1.15"/>
    </reaction>
</comment>
<comment type="catalytic activity">
    <reaction evidence="1">
        <text>a ribonucleoside 5'-diphosphate + H2O = a ribonucleoside 5'-phosphate + phosphate + H(+)</text>
        <dbReference type="Rhea" id="RHEA:36799"/>
        <dbReference type="ChEBI" id="CHEBI:15377"/>
        <dbReference type="ChEBI" id="CHEBI:15378"/>
        <dbReference type="ChEBI" id="CHEBI:43474"/>
        <dbReference type="ChEBI" id="CHEBI:57930"/>
        <dbReference type="ChEBI" id="CHEBI:58043"/>
        <dbReference type="EC" id="3.6.1.6"/>
    </reaction>
</comment>
<comment type="cofactor">
    <cofactor evidence="1">
        <name>Mg(2+)</name>
        <dbReference type="ChEBI" id="CHEBI:18420"/>
    </cofactor>
</comment>
<comment type="similarity">
    <text evidence="1">Belongs to the Ntdp family.</text>
</comment>
<keyword id="KW-0378">Hydrolase</keyword>
<keyword id="KW-0460">Magnesium</keyword>
<keyword id="KW-0479">Metal-binding</keyword>
<keyword id="KW-1185">Reference proteome</keyword>
<organism>
    <name type="scientific">Streptococcus pyogenes serotype M1</name>
    <dbReference type="NCBI Taxonomy" id="301447"/>
    <lineage>
        <taxon>Bacteria</taxon>
        <taxon>Bacillati</taxon>
        <taxon>Bacillota</taxon>
        <taxon>Bacilli</taxon>
        <taxon>Lactobacillales</taxon>
        <taxon>Streptococcaceae</taxon>
        <taxon>Streptococcus</taxon>
    </lineage>
</organism>
<gene>
    <name type="ordered locus">SPy_1608</name>
    <name type="ordered locus">M5005_Spy1321</name>
</gene>
<protein>
    <recommendedName>
        <fullName evidence="1">Nucleoside triphosphate/diphosphate phosphatase</fullName>
        <ecNumber evidence="1">3.6.1.15</ecNumber>
        <ecNumber evidence="1">3.6.1.6</ecNumber>
    </recommendedName>
</protein>